<feature type="chain" id="PRO_0000344707" description="Large ribosomal subunit protein bL36">
    <location>
        <begin position="1"/>
        <end position="38"/>
    </location>
</feature>
<name>RL36_PSEP1</name>
<organism>
    <name type="scientific">Pseudomonas putida (strain ATCC 700007 / DSM 6899 / JCM 31910 / BCRC 17059 / LMG 24140 / F1)</name>
    <dbReference type="NCBI Taxonomy" id="351746"/>
    <lineage>
        <taxon>Bacteria</taxon>
        <taxon>Pseudomonadati</taxon>
        <taxon>Pseudomonadota</taxon>
        <taxon>Gammaproteobacteria</taxon>
        <taxon>Pseudomonadales</taxon>
        <taxon>Pseudomonadaceae</taxon>
        <taxon>Pseudomonas</taxon>
    </lineage>
</organism>
<evidence type="ECO:0000255" key="1">
    <source>
        <dbReference type="HAMAP-Rule" id="MF_00251"/>
    </source>
</evidence>
<evidence type="ECO:0000305" key="2"/>
<gene>
    <name evidence="1" type="primary">rpmJ</name>
    <name type="ordered locus">Pput_0508</name>
</gene>
<dbReference type="EMBL" id="CP000712">
    <property type="protein sequence ID" value="ABQ76678.1"/>
    <property type="status" value="ALT_INIT"/>
    <property type="molecule type" value="Genomic_DNA"/>
</dbReference>
<dbReference type="SMR" id="A5VXR8"/>
<dbReference type="KEGG" id="ppf:Pput_0508"/>
<dbReference type="eggNOG" id="COG0257">
    <property type="taxonomic scope" value="Bacteria"/>
</dbReference>
<dbReference type="HOGENOM" id="CLU_135723_6_2_6"/>
<dbReference type="GO" id="GO:0005737">
    <property type="term" value="C:cytoplasm"/>
    <property type="evidence" value="ECO:0007669"/>
    <property type="project" value="UniProtKB-ARBA"/>
</dbReference>
<dbReference type="GO" id="GO:1990904">
    <property type="term" value="C:ribonucleoprotein complex"/>
    <property type="evidence" value="ECO:0007669"/>
    <property type="project" value="UniProtKB-KW"/>
</dbReference>
<dbReference type="GO" id="GO:0005840">
    <property type="term" value="C:ribosome"/>
    <property type="evidence" value="ECO:0007669"/>
    <property type="project" value="UniProtKB-KW"/>
</dbReference>
<dbReference type="GO" id="GO:0003735">
    <property type="term" value="F:structural constituent of ribosome"/>
    <property type="evidence" value="ECO:0007669"/>
    <property type="project" value="InterPro"/>
</dbReference>
<dbReference type="GO" id="GO:0006412">
    <property type="term" value="P:translation"/>
    <property type="evidence" value="ECO:0007669"/>
    <property type="project" value="UniProtKB-UniRule"/>
</dbReference>
<dbReference type="HAMAP" id="MF_00251">
    <property type="entry name" value="Ribosomal_bL36"/>
    <property type="match status" value="1"/>
</dbReference>
<dbReference type="InterPro" id="IPR000473">
    <property type="entry name" value="Ribosomal_bL36"/>
</dbReference>
<dbReference type="InterPro" id="IPR035977">
    <property type="entry name" value="Ribosomal_bL36_sp"/>
</dbReference>
<dbReference type="NCBIfam" id="TIGR01022">
    <property type="entry name" value="rpmJ_bact"/>
    <property type="match status" value="1"/>
</dbReference>
<dbReference type="PANTHER" id="PTHR42888">
    <property type="entry name" value="50S RIBOSOMAL PROTEIN L36, CHLOROPLASTIC"/>
    <property type="match status" value="1"/>
</dbReference>
<dbReference type="PANTHER" id="PTHR42888:SF1">
    <property type="entry name" value="LARGE RIBOSOMAL SUBUNIT PROTEIN BL36C"/>
    <property type="match status" value="1"/>
</dbReference>
<dbReference type="Pfam" id="PF00444">
    <property type="entry name" value="Ribosomal_L36"/>
    <property type="match status" value="1"/>
</dbReference>
<dbReference type="SUPFAM" id="SSF57840">
    <property type="entry name" value="Ribosomal protein L36"/>
    <property type="match status" value="1"/>
</dbReference>
<dbReference type="PROSITE" id="PS00828">
    <property type="entry name" value="RIBOSOMAL_L36"/>
    <property type="match status" value="1"/>
</dbReference>
<protein>
    <recommendedName>
        <fullName evidence="1">Large ribosomal subunit protein bL36</fullName>
    </recommendedName>
    <alternativeName>
        <fullName evidence="2">50S ribosomal protein L36</fullName>
    </alternativeName>
</protein>
<accession>A5VXR8</accession>
<reference key="1">
    <citation type="submission" date="2007-05" db="EMBL/GenBank/DDBJ databases">
        <title>Complete sequence of Pseudomonas putida F1.</title>
        <authorList>
            <consortium name="US DOE Joint Genome Institute"/>
            <person name="Copeland A."/>
            <person name="Lucas S."/>
            <person name="Lapidus A."/>
            <person name="Barry K."/>
            <person name="Detter J.C."/>
            <person name="Glavina del Rio T."/>
            <person name="Hammon N."/>
            <person name="Israni S."/>
            <person name="Dalin E."/>
            <person name="Tice H."/>
            <person name="Pitluck S."/>
            <person name="Chain P."/>
            <person name="Malfatti S."/>
            <person name="Shin M."/>
            <person name="Vergez L."/>
            <person name="Schmutz J."/>
            <person name="Larimer F."/>
            <person name="Land M."/>
            <person name="Hauser L."/>
            <person name="Kyrpides N."/>
            <person name="Lykidis A."/>
            <person name="Parales R."/>
            <person name="Richardson P."/>
        </authorList>
    </citation>
    <scope>NUCLEOTIDE SEQUENCE [LARGE SCALE GENOMIC DNA]</scope>
    <source>
        <strain>ATCC 700007 / DSM 6899 / JCM 31910 / BCRC 17059 / LMG 24140 / F1</strain>
    </source>
</reference>
<proteinExistence type="inferred from homology"/>
<keyword id="KW-0687">Ribonucleoprotein</keyword>
<keyword id="KW-0689">Ribosomal protein</keyword>
<comment type="similarity">
    <text evidence="1">Belongs to the bacterial ribosomal protein bL36 family.</text>
</comment>
<comment type="sequence caution" evidence="2">
    <conflict type="erroneous initiation">
        <sequence resource="EMBL-CDS" id="ABQ76678"/>
    </conflict>
</comment>
<sequence>MKVRASVKKLCRNCKIIRREGVVRVICSAEPRHKQRQG</sequence>